<organism>
    <name type="scientific">Streptococcus suis (strain 98HAH33)</name>
    <dbReference type="NCBI Taxonomy" id="391296"/>
    <lineage>
        <taxon>Bacteria</taxon>
        <taxon>Bacillati</taxon>
        <taxon>Bacillota</taxon>
        <taxon>Bacilli</taxon>
        <taxon>Lactobacillales</taxon>
        <taxon>Streptococcaceae</taxon>
        <taxon>Streptococcus</taxon>
    </lineage>
</organism>
<comment type="function">
    <text evidence="1">Cell wall formation.</text>
</comment>
<comment type="catalytic activity">
    <reaction evidence="1">
        <text>UDP-N-acetyl-alpha-D-muramate + L-alanine + ATP = UDP-N-acetyl-alpha-D-muramoyl-L-alanine + ADP + phosphate + H(+)</text>
        <dbReference type="Rhea" id="RHEA:23372"/>
        <dbReference type="ChEBI" id="CHEBI:15378"/>
        <dbReference type="ChEBI" id="CHEBI:30616"/>
        <dbReference type="ChEBI" id="CHEBI:43474"/>
        <dbReference type="ChEBI" id="CHEBI:57972"/>
        <dbReference type="ChEBI" id="CHEBI:70757"/>
        <dbReference type="ChEBI" id="CHEBI:83898"/>
        <dbReference type="ChEBI" id="CHEBI:456216"/>
        <dbReference type="EC" id="6.3.2.8"/>
    </reaction>
</comment>
<comment type="pathway">
    <text evidence="1">Cell wall biogenesis; peptidoglycan biosynthesis.</text>
</comment>
<comment type="subcellular location">
    <subcellularLocation>
        <location evidence="1">Cytoplasm</location>
    </subcellularLocation>
</comment>
<comment type="similarity">
    <text evidence="1">Belongs to the MurCDEF family.</text>
</comment>
<evidence type="ECO:0000255" key="1">
    <source>
        <dbReference type="HAMAP-Rule" id="MF_00046"/>
    </source>
</evidence>
<proteinExistence type="inferred from homology"/>
<name>MURC_STRS2</name>
<dbReference type="EC" id="6.3.2.8" evidence="1"/>
<dbReference type="EMBL" id="CP000408">
    <property type="protein sequence ID" value="ABP92890.1"/>
    <property type="molecule type" value="Genomic_DNA"/>
</dbReference>
<dbReference type="SMR" id="A4W3F1"/>
<dbReference type="KEGG" id="ssv:SSU98_1732"/>
<dbReference type="HOGENOM" id="CLU_028104_1_0_9"/>
<dbReference type="UniPathway" id="UPA00219"/>
<dbReference type="GO" id="GO:0005737">
    <property type="term" value="C:cytoplasm"/>
    <property type="evidence" value="ECO:0007669"/>
    <property type="project" value="UniProtKB-SubCell"/>
</dbReference>
<dbReference type="GO" id="GO:0005524">
    <property type="term" value="F:ATP binding"/>
    <property type="evidence" value="ECO:0007669"/>
    <property type="project" value="UniProtKB-UniRule"/>
</dbReference>
<dbReference type="GO" id="GO:0008763">
    <property type="term" value="F:UDP-N-acetylmuramate-L-alanine ligase activity"/>
    <property type="evidence" value="ECO:0007669"/>
    <property type="project" value="UniProtKB-UniRule"/>
</dbReference>
<dbReference type="GO" id="GO:0051301">
    <property type="term" value="P:cell division"/>
    <property type="evidence" value="ECO:0007669"/>
    <property type="project" value="UniProtKB-KW"/>
</dbReference>
<dbReference type="GO" id="GO:0071555">
    <property type="term" value="P:cell wall organization"/>
    <property type="evidence" value="ECO:0007669"/>
    <property type="project" value="UniProtKB-KW"/>
</dbReference>
<dbReference type="GO" id="GO:0009252">
    <property type="term" value="P:peptidoglycan biosynthetic process"/>
    <property type="evidence" value="ECO:0007669"/>
    <property type="project" value="UniProtKB-UniRule"/>
</dbReference>
<dbReference type="GO" id="GO:0008360">
    <property type="term" value="P:regulation of cell shape"/>
    <property type="evidence" value="ECO:0007669"/>
    <property type="project" value="UniProtKB-KW"/>
</dbReference>
<dbReference type="Gene3D" id="3.90.190.20">
    <property type="entry name" value="Mur ligase, C-terminal domain"/>
    <property type="match status" value="1"/>
</dbReference>
<dbReference type="Gene3D" id="3.40.1190.10">
    <property type="entry name" value="Mur-like, catalytic domain"/>
    <property type="match status" value="1"/>
</dbReference>
<dbReference type="Gene3D" id="3.40.50.720">
    <property type="entry name" value="NAD(P)-binding Rossmann-like Domain"/>
    <property type="match status" value="1"/>
</dbReference>
<dbReference type="HAMAP" id="MF_00046">
    <property type="entry name" value="MurC"/>
    <property type="match status" value="1"/>
</dbReference>
<dbReference type="InterPro" id="IPR036565">
    <property type="entry name" value="Mur-like_cat_sf"/>
</dbReference>
<dbReference type="InterPro" id="IPR004101">
    <property type="entry name" value="Mur_ligase_C"/>
</dbReference>
<dbReference type="InterPro" id="IPR036615">
    <property type="entry name" value="Mur_ligase_C_dom_sf"/>
</dbReference>
<dbReference type="InterPro" id="IPR013221">
    <property type="entry name" value="Mur_ligase_cen"/>
</dbReference>
<dbReference type="InterPro" id="IPR000713">
    <property type="entry name" value="Mur_ligase_N"/>
</dbReference>
<dbReference type="InterPro" id="IPR050061">
    <property type="entry name" value="MurCDEF_pg_biosynth"/>
</dbReference>
<dbReference type="InterPro" id="IPR005758">
    <property type="entry name" value="UDP-N-AcMur_Ala_ligase_MurC"/>
</dbReference>
<dbReference type="NCBIfam" id="TIGR01082">
    <property type="entry name" value="murC"/>
    <property type="match status" value="1"/>
</dbReference>
<dbReference type="PANTHER" id="PTHR43445:SF3">
    <property type="entry name" value="UDP-N-ACETYLMURAMATE--L-ALANINE LIGASE"/>
    <property type="match status" value="1"/>
</dbReference>
<dbReference type="PANTHER" id="PTHR43445">
    <property type="entry name" value="UDP-N-ACETYLMURAMATE--L-ALANINE LIGASE-RELATED"/>
    <property type="match status" value="1"/>
</dbReference>
<dbReference type="Pfam" id="PF01225">
    <property type="entry name" value="Mur_ligase"/>
    <property type="match status" value="1"/>
</dbReference>
<dbReference type="Pfam" id="PF02875">
    <property type="entry name" value="Mur_ligase_C"/>
    <property type="match status" value="1"/>
</dbReference>
<dbReference type="Pfam" id="PF08245">
    <property type="entry name" value="Mur_ligase_M"/>
    <property type="match status" value="1"/>
</dbReference>
<dbReference type="SUPFAM" id="SSF51984">
    <property type="entry name" value="MurCD N-terminal domain"/>
    <property type="match status" value="1"/>
</dbReference>
<dbReference type="SUPFAM" id="SSF53623">
    <property type="entry name" value="MurD-like peptide ligases, catalytic domain"/>
    <property type="match status" value="1"/>
</dbReference>
<dbReference type="SUPFAM" id="SSF53244">
    <property type="entry name" value="MurD-like peptide ligases, peptide-binding domain"/>
    <property type="match status" value="1"/>
</dbReference>
<reference key="1">
    <citation type="journal article" date="2007" name="PLoS ONE">
        <title>A glimpse of streptococcal toxic shock syndrome from comparative genomics of S. suis 2 Chinese isolates.</title>
        <authorList>
            <person name="Chen C."/>
            <person name="Tang J."/>
            <person name="Dong W."/>
            <person name="Wang C."/>
            <person name="Feng Y."/>
            <person name="Wang J."/>
            <person name="Zheng F."/>
            <person name="Pan X."/>
            <person name="Liu D."/>
            <person name="Li M."/>
            <person name="Song Y."/>
            <person name="Zhu X."/>
            <person name="Sun H."/>
            <person name="Feng T."/>
            <person name="Guo Z."/>
            <person name="Ju A."/>
            <person name="Ge J."/>
            <person name="Dong Y."/>
            <person name="Sun W."/>
            <person name="Jiang Y."/>
            <person name="Wang J."/>
            <person name="Yan J."/>
            <person name="Yang H."/>
            <person name="Wang X."/>
            <person name="Gao G.F."/>
            <person name="Yang R."/>
            <person name="Wang J."/>
            <person name="Yu J."/>
        </authorList>
    </citation>
    <scope>NUCLEOTIDE SEQUENCE [LARGE SCALE GENOMIC DNA]</scope>
    <source>
        <strain>98HAH33</strain>
    </source>
</reference>
<sequence>MTKTYHFIGIKGSGMSALALMLHQMGHKVQGSDVEKYYFTQRGLEQAGIQILPFDEKNITADVELIAGNAFRPDNNVEIAYADAQGYTYKRYHEFLGEFMKGFTSLGVAGAHGKTSTTGLLAHVMRNITDTSFLIGDGTGRGSANAQYFVFESDEYERHFAPYHPEYSIITNIDFDHPDYFTSLEDVFNAFNDYAKQVKNALFVFGEDEQLRRITANAPIYYYGLEDNNDFVAYDLKPSTSGSQFKVRHGEEELGEFQIPTFGKHNVMNATAVIANLYIAGFDLQLVAEHLKTFGGVKRRFTEKIVNDTVIIDDFAHHPTEIIATIDAARQKYPSKELVAIFQPHTFTRTIALLDEFADALNGADAVYLAQIYGSARETDNGQVKVEDLAAKINKKGGLVTVENTSPLLDHDNAVYVFMGAGDIQSYEYSFERLLSNLTNNVQ</sequence>
<gene>
    <name evidence="1" type="primary">murC</name>
    <name type="ordered locus">SSU98_1732</name>
</gene>
<protein>
    <recommendedName>
        <fullName evidence="1">UDP-N-acetylmuramate--L-alanine ligase</fullName>
        <ecNumber evidence="1">6.3.2.8</ecNumber>
    </recommendedName>
    <alternativeName>
        <fullName evidence="1">UDP-N-acetylmuramoyl-L-alanine synthetase</fullName>
    </alternativeName>
</protein>
<accession>A4W3F1</accession>
<feature type="chain" id="PRO_1000004426" description="UDP-N-acetylmuramate--L-alanine ligase">
    <location>
        <begin position="1"/>
        <end position="443"/>
    </location>
</feature>
<feature type="binding site" evidence="1">
    <location>
        <begin position="110"/>
        <end position="116"/>
    </location>
    <ligand>
        <name>ATP</name>
        <dbReference type="ChEBI" id="CHEBI:30616"/>
    </ligand>
</feature>
<keyword id="KW-0067">ATP-binding</keyword>
<keyword id="KW-0131">Cell cycle</keyword>
<keyword id="KW-0132">Cell division</keyword>
<keyword id="KW-0133">Cell shape</keyword>
<keyword id="KW-0961">Cell wall biogenesis/degradation</keyword>
<keyword id="KW-0963">Cytoplasm</keyword>
<keyword id="KW-0436">Ligase</keyword>
<keyword id="KW-0547">Nucleotide-binding</keyword>
<keyword id="KW-0573">Peptidoglycan synthesis</keyword>